<accession>Q8PNS4</accession>
<reference key="1">
    <citation type="journal article" date="2002" name="Nature">
        <title>Comparison of the genomes of two Xanthomonas pathogens with differing host specificities.</title>
        <authorList>
            <person name="da Silva A.C.R."/>
            <person name="Ferro J.A."/>
            <person name="Reinach F.C."/>
            <person name="Farah C.S."/>
            <person name="Furlan L.R."/>
            <person name="Quaggio R.B."/>
            <person name="Monteiro-Vitorello C.B."/>
            <person name="Van Sluys M.A."/>
            <person name="Almeida N.F. Jr."/>
            <person name="Alves L.M.C."/>
            <person name="do Amaral A.M."/>
            <person name="Bertolini M.C."/>
            <person name="Camargo L.E.A."/>
            <person name="Camarotte G."/>
            <person name="Cannavan F."/>
            <person name="Cardozo J."/>
            <person name="Chambergo F."/>
            <person name="Ciapina L.P."/>
            <person name="Cicarelli R.M.B."/>
            <person name="Coutinho L.L."/>
            <person name="Cursino-Santos J.R."/>
            <person name="El-Dorry H."/>
            <person name="Faria J.B."/>
            <person name="Ferreira A.J.S."/>
            <person name="Ferreira R.C.C."/>
            <person name="Ferro M.I.T."/>
            <person name="Formighieri E.F."/>
            <person name="Franco M.C."/>
            <person name="Greggio C.C."/>
            <person name="Gruber A."/>
            <person name="Katsuyama A.M."/>
            <person name="Kishi L.T."/>
            <person name="Leite R.P."/>
            <person name="Lemos E.G.M."/>
            <person name="Lemos M.V.F."/>
            <person name="Locali E.C."/>
            <person name="Machado M.A."/>
            <person name="Madeira A.M.B.N."/>
            <person name="Martinez-Rossi N.M."/>
            <person name="Martins E.C."/>
            <person name="Meidanis J."/>
            <person name="Menck C.F.M."/>
            <person name="Miyaki C.Y."/>
            <person name="Moon D.H."/>
            <person name="Moreira L.M."/>
            <person name="Novo M.T.M."/>
            <person name="Okura V.K."/>
            <person name="Oliveira M.C."/>
            <person name="Oliveira V.R."/>
            <person name="Pereira H.A."/>
            <person name="Rossi A."/>
            <person name="Sena J.A.D."/>
            <person name="Silva C."/>
            <person name="de Souza R.F."/>
            <person name="Spinola L.A.F."/>
            <person name="Takita M.A."/>
            <person name="Tamura R.E."/>
            <person name="Teixeira E.C."/>
            <person name="Tezza R.I.D."/>
            <person name="Trindade dos Santos M."/>
            <person name="Truffi D."/>
            <person name="Tsai S.M."/>
            <person name="White F.F."/>
            <person name="Setubal J.C."/>
            <person name="Kitajima J.P."/>
        </authorList>
    </citation>
    <scope>NUCLEOTIDE SEQUENCE [LARGE SCALE GENOMIC DNA]</scope>
    <source>
        <strain>306</strain>
    </source>
</reference>
<proteinExistence type="inferred from homology"/>
<sequence length="216" mass="22871">MTKKYSLGFVGRKAGMSRVFTEDGRSVPVTLIEATPNRIAQIKTVEVDGYSAVQVTVGARRAALVNKPAAGHFAKAKVEAGRGLWEFRVEDAQLGDFAVGGEIKADIFEVGQKVDVQGVTKGKGFQGTIKRYNFRMGDATHGNSLSHRAPGSLGQRQTPGRVFPGKKMSGHMGAVQQSTQNLEVVKVDVERGLIAIRGAVPGAAGGDVIVRPASKA</sequence>
<evidence type="ECO:0000255" key="1">
    <source>
        <dbReference type="HAMAP-Rule" id="MF_01325"/>
    </source>
</evidence>
<evidence type="ECO:0000305" key="2"/>
<gene>
    <name evidence="1" type="primary">rplC</name>
    <name type="ordered locus">XAC0972</name>
</gene>
<feature type="chain" id="PRO_0000077192" description="Large ribosomal subunit protein uL3">
    <location>
        <begin position="1"/>
        <end position="216"/>
    </location>
</feature>
<feature type="modified residue" description="N5-methylglutamine" evidence="1">
    <location>
        <position position="157"/>
    </location>
</feature>
<keyword id="KW-0488">Methylation</keyword>
<keyword id="KW-0687">Ribonucleoprotein</keyword>
<keyword id="KW-0689">Ribosomal protein</keyword>
<keyword id="KW-0694">RNA-binding</keyword>
<keyword id="KW-0699">rRNA-binding</keyword>
<dbReference type="EMBL" id="AE008923">
    <property type="protein sequence ID" value="AAM35855.1"/>
    <property type="molecule type" value="Genomic_DNA"/>
</dbReference>
<dbReference type="RefSeq" id="WP_005917121.1">
    <property type="nucleotide sequence ID" value="NC_003919.1"/>
</dbReference>
<dbReference type="SMR" id="Q8PNS4"/>
<dbReference type="GeneID" id="97509336"/>
<dbReference type="KEGG" id="xac:XAC0972"/>
<dbReference type="eggNOG" id="COG0087">
    <property type="taxonomic scope" value="Bacteria"/>
</dbReference>
<dbReference type="HOGENOM" id="CLU_044142_4_1_6"/>
<dbReference type="Proteomes" id="UP000000576">
    <property type="component" value="Chromosome"/>
</dbReference>
<dbReference type="GO" id="GO:0022625">
    <property type="term" value="C:cytosolic large ribosomal subunit"/>
    <property type="evidence" value="ECO:0007669"/>
    <property type="project" value="TreeGrafter"/>
</dbReference>
<dbReference type="GO" id="GO:0019843">
    <property type="term" value="F:rRNA binding"/>
    <property type="evidence" value="ECO:0007669"/>
    <property type="project" value="UniProtKB-UniRule"/>
</dbReference>
<dbReference type="GO" id="GO:0003735">
    <property type="term" value="F:structural constituent of ribosome"/>
    <property type="evidence" value="ECO:0007669"/>
    <property type="project" value="InterPro"/>
</dbReference>
<dbReference type="GO" id="GO:0006412">
    <property type="term" value="P:translation"/>
    <property type="evidence" value="ECO:0007669"/>
    <property type="project" value="UniProtKB-UniRule"/>
</dbReference>
<dbReference type="FunFam" id="2.40.30.10:FF:000004">
    <property type="entry name" value="50S ribosomal protein L3"/>
    <property type="match status" value="1"/>
</dbReference>
<dbReference type="FunFam" id="3.30.160.810:FF:000001">
    <property type="entry name" value="50S ribosomal protein L3"/>
    <property type="match status" value="1"/>
</dbReference>
<dbReference type="Gene3D" id="3.30.160.810">
    <property type="match status" value="1"/>
</dbReference>
<dbReference type="Gene3D" id="2.40.30.10">
    <property type="entry name" value="Translation factors"/>
    <property type="match status" value="1"/>
</dbReference>
<dbReference type="HAMAP" id="MF_01325_B">
    <property type="entry name" value="Ribosomal_uL3_B"/>
    <property type="match status" value="1"/>
</dbReference>
<dbReference type="InterPro" id="IPR000597">
    <property type="entry name" value="Ribosomal_uL3"/>
</dbReference>
<dbReference type="InterPro" id="IPR019927">
    <property type="entry name" value="Ribosomal_uL3_bac/org-type"/>
</dbReference>
<dbReference type="InterPro" id="IPR019926">
    <property type="entry name" value="Ribosomal_uL3_CS"/>
</dbReference>
<dbReference type="InterPro" id="IPR009000">
    <property type="entry name" value="Transl_B-barrel_sf"/>
</dbReference>
<dbReference type="NCBIfam" id="TIGR03625">
    <property type="entry name" value="L3_bact"/>
    <property type="match status" value="1"/>
</dbReference>
<dbReference type="PANTHER" id="PTHR11229">
    <property type="entry name" value="50S RIBOSOMAL PROTEIN L3"/>
    <property type="match status" value="1"/>
</dbReference>
<dbReference type="PANTHER" id="PTHR11229:SF16">
    <property type="entry name" value="LARGE RIBOSOMAL SUBUNIT PROTEIN UL3C"/>
    <property type="match status" value="1"/>
</dbReference>
<dbReference type="Pfam" id="PF00297">
    <property type="entry name" value="Ribosomal_L3"/>
    <property type="match status" value="1"/>
</dbReference>
<dbReference type="SUPFAM" id="SSF50447">
    <property type="entry name" value="Translation proteins"/>
    <property type="match status" value="1"/>
</dbReference>
<dbReference type="PROSITE" id="PS00474">
    <property type="entry name" value="RIBOSOMAL_L3"/>
    <property type="match status" value="1"/>
</dbReference>
<comment type="function">
    <text evidence="1">One of the primary rRNA binding proteins, it binds directly near the 3'-end of the 23S rRNA, where it nucleates assembly of the 50S subunit.</text>
</comment>
<comment type="subunit">
    <text evidence="1">Part of the 50S ribosomal subunit. Forms a cluster with proteins L14 and L19.</text>
</comment>
<comment type="PTM">
    <text evidence="1">Methylated by PrmB.</text>
</comment>
<comment type="similarity">
    <text evidence="1">Belongs to the universal ribosomal protein uL3 family.</text>
</comment>
<protein>
    <recommendedName>
        <fullName evidence="1">Large ribosomal subunit protein uL3</fullName>
    </recommendedName>
    <alternativeName>
        <fullName evidence="2">50S ribosomal protein L3</fullName>
    </alternativeName>
</protein>
<organism>
    <name type="scientific">Xanthomonas axonopodis pv. citri (strain 306)</name>
    <dbReference type="NCBI Taxonomy" id="190486"/>
    <lineage>
        <taxon>Bacteria</taxon>
        <taxon>Pseudomonadati</taxon>
        <taxon>Pseudomonadota</taxon>
        <taxon>Gammaproteobacteria</taxon>
        <taxon>Lysobacterales</taxon>
        <taxon>Lysobacteraceae</taxon>
        <taxon>Xanthomonas</taxon>
    </lineage>
</organism>
<name>RL3_XANAC</name>